<evidence type="ECO:0000250" key="1"/>
<evidence type="ECO:0000250" key="2">
    <source>
        <dbReference type="UniProtKB" id="P42819"/>
    </source>
</evidence>
<evidence type="ECO:0000255" key="3"/>
<evidence type="ECO:0000256" key="4">
    <source>
        <dbReference type="SAM" id="MobiDB-lite"/>
    </source>
</evidence>
<evidence type="ECO:0000305" key="5"/>
<accession>P53613</accession>
<protein>
    <recommendedName>
        <fullName>Serum amyloid A protein</fullName>
        <shortName>SAA</shortName>
    </recommendedName>
</protein>
<organism>
    <name type="scientific">Notamacropus eugenii</name>
    <name type="common">Tammar wallaby</name>
    <name type="synonym">Macropus eugenii</name>
    <dbReference type="NCBI Taxonomy" id="9315"/>
    <lineage>
        <taxon>Eukaryota</taxon>
        <taxon>Metazoa</taxon>
        <taxon>Chordata</taxon>
        <taxon>Craniata</taxon>
        <taxon>Vertebrata</taxon>
        <taxon>Euteleostomi</taxon>
        <taxon>Mammalia</taxon>
        <taxon>Metatheria</taxon>
        <taxon>Diprotodontia</taxon>
        <taxon>Macropodidae</taxon>
        <taxon>Notamacropus</taxon>
    </lineage>
</organism>
<sequence length="127" mass="14322">MKLLTSLFLLSLVLCVNSQGWLRDSLDFLNQARLGAGDMWRAYRDMREANFKNSDKYFHARGNYDAAKRGPGGVWAAEVLSDAREFLQGGSSGRGVEDSMADQEANRWGRSGKDPNRYRPKGLDPKY</sequence>
<comment type="function">
    <text>Major acute phase reactant. Apolipoprotein of the HDL complex.</text>
</comment>
<comment type="subcellular location">
    <subcellularLocation>
        <location evidence="1">Secreted</location>
    </subcellularLocation>
</comment>
<comment type="tissue specificity">
    <text>Expressed by the liver; secreted in plasma.</text>
</comment>
<comment type="similarity">
    <text evidence="5">Belongs to the SAA family.</text>
</comment>
<reference key="1">
    <citation type="journal article" date="1996" name="Scand. J. Immunol.">
        <title>Wallaby serum amyloid A protein: cDNA cloning, sequence and evolutionary analysis.</title>
        <authorList>
            <person name="Uhlar C.M."/>
            <person name="Black I.L."/>
            <person name="Shields D.C."/>
            <person name="Brack C.M."/>
            <person name="Schreiber G."/>
            <person name="Whitehead A.S."/>
        </authorList>
    </citation>
    <scope>NUCLEOTIDE SEQUENCE [MRNA]</scope>
    <source>
        <tissue>Liver</tissue>
    </source>
</reference>
<keyword id="KW-0011">Acute phase</keyword>
<keyword id="KW-0345">HDL</keyword>
<keyword id="KW-0873">Pyrrolidone carboxylic acid</keyword>
<keyword id="KW-0964">Secreted</keyword>
<keyword id="KW-0732">Signal</keyword>
<name>SAA_NOTEU</name>
<proteinExistence type="evidence at transcript level"/>
<gene>
    <name type="primary">SAA1</name>
</gene>
<feature type="signal peptide" evidence="3">
    <location>
        <begin position="1"/>
        <end position="18"/>
    </location>
</feature>
<feature type="chain" id="PRO_0000031584" description="Serum amyloid A protein">
    <location>
        <begin position="19"/>
        <end position="127"/>
    </location>
</feature>
<feature type="region of interest" description="Disordered" evidence="4">
    <location>
        <begin position="89"/>
        <end position="127"/>
    </location>
</feature>
<feature type="compositionally biased region" description="Basic and acidic residues" evidence="4">
    <location>
        <begin position="104"/>
        <end position="127"/>
    </location>
</feature>
<feature type="modified residue" description="Pyrrolidone carboxylic acid" evidence="2">
    <location>
        <position position="19"/>
    </location>
</feature>
<dbReference type="EMBL" id="U39363">
    <property type="protein sequence ID" value="AAB02187.1"/>
    <property type="molecule type" value="mRNA"/>
</dbReference>
<dbReference type="SMR" id="P53613"/>
<dbReference type="HOGENOM" id="CLU_129936_0_0_1"/>
<dbReference type="TreeFam" id="TF332544"/>
<dbReference type="GO" id="GO:0034364">
    <property type="term" value="C:high-density lipoprotein particle"/>
    <property type="evidence" value="ECO:0007669"/>
    <property type="project" value="UniProtKB-KW"/>
</dbReference>
<dbReference type="GO" id="GO:0006953">
    <property type="term" value="P:acute-phase response"/>
    <property type="evidence" value="ECO:0007669"/>
    <property type="project" value="UniProtKB-KW"/>
</dbReference>
<dbReference type="FunFam" id="1.10.132.110:FF:000001">
    <property type="entry name" value="Serum amyloid A protein"/>
    <property type="match status" value="1"/>
</dbReference>
<dbReference type="Gene3D" id="1.10.132.110">
    <property type="entry name" value="Serum amyloid A protein"/>
    <property type="match status" value="1"/>
</dbReference>
<dbReference type="InterPro" id="IPR000096">
    <property type="entry name" value="Serum_amyloid_A"/>
</dbReference>
<dbReference type="InterPro" id="IPR052464">
    <property type="entry name" value="Synovial_Prolif_Regulator"/>
</dbReference>
<dbReference type="PANTHER" id="PTHR23424">
    <property type="entry name" value="SERUM AMYLOID A"/>
    <property type="match status" value="1"/>
</dbReference>
<dbReference type="PANTHER" id="PTHR23424:SF29">
    <property type="entry name" value="SERUM AMYLOID A PROTEIN"/>
    <property type="match status" value="1"/>
</dbReference>
<dbReference type="Pfam" id="PF00277">
    <property type="entry name" value="SAA"/>
    <property type="match status" value="1"/>
</dbReference>
<dbReference type="PIRSF" id="PIRSF002472">
    <property type="entry name" value="Serum_amyloid_A"/>
    <property type="match status" value="1"/>
</dbReference>
<dbReference type="PRINTS" id="PR00306">
    <property type="entry name" value="SERUMAMYLOID"/>
</dbReference>
<dbReference type="SMART" id="SM00197">
    <property type="entry name" value="SAA"/>
    <property type="match status" value="1"/>
</dbReference>
<dbReference type="PROSITE" id="PS00992">
    <property type="entry name" value="SAA"/>
    <property type="match status" value="1"/>
</dbReference>